<name>APEX1_MOUSE</name>
<sequence length="317" mass="35490">MPKRGKKAAADDGEEPKSEPETKKSKGAAKKTEKEAAGEGPVLYEDPPDQKTSPSGKSATLKICSWNVDGLRAWIKKKGLDWVKEEAPDILCLQETKCSENKLPAELQELPGLTHQYWSAPSDKEGYSGVGLLSRQCPLKVSYGIGEEEHDQEGRVIVAEFESFVLVTAYVPNAGRGLVRLEYRQRWDEAFRKFLKDLASRKPLVLCGDLNVAHEEIDLRNPKGNKKNAGFTPQERQGFGELLQAVPLADSFRHLYPNTAYAYTFWTYMMNARSKNVGWRLDYFLLSHSLLPALCDSKIRSKALGSDHCPITLYLAL</sequence>
<gene>
    <name type="primary">Apex1</name>
    <name type="synonym">Ape</name>
    <name type="synonym">Apex</name>
    <name type="synonym">Ref1</name>
</gene>
<keyword id="KW-0002">3D-structure</keyword>
<keyword id="KW-0007">Acetylation</keyword>
<keyword id="KW-0010">Activator</keyword>
<keyword id="KW-0165">Cleavage on pair of basic residues</keyword>
<keyword id="KW-0963">Cytoplasm</keyword>
<keyword id="KW-0903">Direct protein sequencing</keyword>
<keyword id="KW-1015">Disulfide bond</keyword>
<keyword id="KW-0227">DNA damage</keyword>
<keyword id="KW-0233">DNA recombination</keyword>
<keyword id="KW-0234">DNA repair</keyword>
<keyword id="KW-0238">DNA-binding</keyword>
<keyword id="KW-0255">Endonuclease</keyword>
<keyword id="KW-0256">Endoplasmic reticulum</keyword>
<keyword id="KW-0269">Exonuclease</keyword>
<keyword id="KW-0378">Hydrolase</keyword>
<keyword id="KW-0460">Magnesium</keyword>
<keyword id="KW-0479">Metal-binding</keyword>
<keyword id="KW-0496">Mitochondrion</keyword>
<keyword id="KW-0540">Nuclease</keyword>
<keyword id="KW-0539">Nucleus</keyword>
<keyword id="KW-0597">Phosphoprotein</keyword>
<keyword id="KW-1185">Reference proteome</keyword>
<keyword id="KW-0678">Repressor</keyword>
<keyword id="KW-0694">RNA-binding</keyword>
<keyword id="KW-0702">S-nitrosylation</keyword>
<keyword id="KW-0804">Transcription</keyword>
<keyword id="KW-0805">Transcription regulation</keyword>
<keyword id="KW-0832">Ubl conjugation</keyword>
<feature type="initiator methionine" description="Removed" evidence="6">
    <location>
        <position position="1"/>
    </location>
</feature>
<feature type="chain" id="PRO_0000200011" description="DNA repair nuclease/redox regulator APEX1">
    <location>
        <begin position="2"/>
        <end position="317"/>
    </location>
</feature>
<feature type="chain" id="PRO_0000402573" description="DNA repair nuclease/redox regulator APEX1, mitochondrial" evidence="1">
    <location>
        <begin position="31"/>
        <end position="317"/>
    </location>
</feature>
<feature type="region of interest" description="Disordered" evidence="5">
    <location>
        <begin position="1"/>
        <end position="58"/>
    </location>
</feature>
<feature type="region of interest" description="Necessary for interaction with YBX1, binding to RNA, association together with NPM1 to rRNA, endoribonuclease activity on abasic RNA and localization in the nucleoli" evidence="1">
    <location>
        <begin position="2"/>
        <end position="32"/>
    </location>
</feature>
<feature type="region of interest" description="Necessary for interaction with NPM1 and for efficient rRNA binding" evidence="1">
    <location>
        <begin position="22"/>
        <end position="32"/>
    </location>
</feature>
<feature type="region of interest" description="Mitochondrial targeting sequence (MTS)" evidence="1">
    <location>
        <begin position="288"/>
        <end position="317"/>
    </location>
</feature>
<feature type="short sequence motif" description="Nuclear localization signal (NLS)" evidence="1">
    <location>
        <begin position="8"/>
        <end position="12"/>
    </location>
</feature>
<feature type="short sequence motif" description="Nuclear export signal (NES)" evidence="1">
    <location>
        <begin position="63"/>
        <end position="79"/>
    </location>
</feature>
<feature type="compositionally biased region" description="Basic and acidic residues" evidence="5">
    <location>
        <begin position="15"/>
        <end position="37"/>
    </location>
</feature>
<feature type="active site" evidence="1">
    <location>
        <position position="170"/>
    </location>
</feature>
<feature type="active site" description="Proton donor/acceptor" evidence="1">
    <location>
        <position position="209"/>
    </location>
</feature>
<feature type="binding site" evidence="1">
    <location>
        <position position="69"/>
    </location>
    <ligand>
        <name>Mg(2+)</name>
        <dbReference type="ChEBI" id="CHEBI:18420"/>
        <label>1</label>
    </ligand>
</feature>
<feature type="binding site" evidence="1">
    <location>
        <position position="95"/>
    </location>
    <ligand>
        <name>Mg(2+)</name>
        <dbReference type="ChEBI" id="CHEBI:18420"/>
        <label>1</label>
    </ligand>
</feature>
<feature type="binding site" evidence="1">
    <location>
        <position position="209"/>
    </location>
    <ligand>
        <name>Mg(2+)</name>
        <dbReference type="ChEBI" id="CHEBI:18420"/>
        <label>2</label>
    </ligand>
</feature>
<feature type="binding site" evidence="1">
    <location>
        <position position="211"/>
    </location>
    <ligand>
        <name>Mg(2+)</name>
        <dbReference type="ChEBI" id="CHEBI:18420"/>
        <label>2</label>
    </ligand>
</feature>
<feature type="binding site" evidence="1">
    <location>
        <position position="307"/>
    </location>
    <ligand>
        <name>Mg(2+)</name>
        <dbReference type="ChEBI" id="CHEBI:18420"/>
        <label>1</label>
    </ligand>
</feature>
<feature type="site" description="Cleavage; by granzyme A" evidence="1">
    <location>
        <begin position="30"/>
        <end position="31"/>
    </location>
</feature>
<feature type="site" description="Important for substrate recognition" evidence="1">
    <location>
        <position position="211"/>
    </location>
</feature>
<feature type="site" description="Transition state stabilizer" evidence="1">
    <location>
        <position position="211"/>
    </location>
</feature>
<feature type="site" description="Important for catalytic activity" evidence="1">
    <location>
        <position position="282"/>
    </location>
</feature>
<feature type="site" description="Interaction with DNA substrate" evidence="1">
    <location>
        <position position="308"/>
    </location>
</feature>
<feature type="modified residue" description="N6-acetyllysine; by EP300" evidence="3">
    <location>
        <position position="6"/>
    </location>
</feature>
<feature type="modified residue" description="N6-acetyllysine; by EP300" evidence="3">
    <location>
        <position position="7"/>
    </location>
</feature>
<feature type="modified residue" description="Phosphoserine" evidence="12">
    <location>
        <position position="18"/>
    </location>
</feature>
<feature type="modified residue" description="N6-acetyllysine" evidence="3">
    <location>
        <position position="26"/>
    </location>
</feature>
<feature type="modified residue" description="N6-acetyllysine" evidence="3">
    <location>
        <position position="30"/>
    </location>
</feature>
<feature type="modified residue" description="N6-acetyllysine" evidence="3">
    <location>
        <position position="31"/>
    </location>
</feature>
<feature type="modified residue" description="N6-acetyllysine" evidence="3">
    <location>
        <position position="34"/>
    </location>
</feature>
<feature type="modified residue" description="Phosphoserine" evidence="3">
    <location>
        <position position="53"/>
    </location>
</feature>
<feature type="modified residue" description="S-nitrosocysteine; alternate" evidence="3">
    <location>
        <position position="64"/>
    </location>
</feature>
<feature type="modified residue" description="S-nitrosocysteine; alternate" evidence="3">
    <location>
        <position position="92"/>
    </location>
</feature>
<feature type="modified residue" description="N6-acetyllysine" evidence="3">
    <location>
        <position position="196"/>
    </location>
</feature>
<feature type="modified residue" description="Phosphothreonine; by CDK5" evidence="9">
    <location>
        <position position="232"/>
    </location>
</feature>
<feature type="modified residue" description="S-nitrosocysteine" evidence="3">
    <location>
        <position position="309"/>
    </location>
</feature>
<feature type="disulfide bond" description="Alternate" evidence="1">
    <location>
        <begin position="64"/>
        <end position="92"/>
    </location>
</feature>
<feature type="mutagenesis site" description="Reduced CDK5-mediated phosphorylation. Loss of CDK5-mediated phosphorylation; when associated with T-232." evidence="9">
    <original>S</original>
    <variation>A</variation>
    <location>
        <position position="53"/>
    </location>
</feature>
<feature type="mutagenesis site" description="Reduced CDK5-mediated phosphorylation. Confers neuron resistance to MPP(+)/MPTP (1-methyl-4-phenylpyridinium). Loss of CDK5-mediated phosphorylation; when associated with S-53." evidence="9">
    <original>T</original>
    <variation>A</variation>
    <location>
        <position position="232"/>
    </location>
</feature>
<feature type="mutagenesis site" description="Confers neuron sensitivity to MPP(+)/MPTP (1-methyl-4-phenylpyridinium)." evidence="9">
    <original>T</original>
    <variation>E</variation>
    <location>
        <position position="232"/>
    </location>
</feature>
<feature type="strand" evidence="13">
    <location>
        <begin position="61"/>
        <end position="67"/>
    </location>
</feature>
<feature type="helix" evidence="13">
    <location>
        <begin position="71"/>
        <end position="76"/>
    </location>
</feature>
<feature type="helix" evidence="13">
    <location>
        <begin position="79"/>
        <end position="86"/>
    </location>
</feature>
<feature type="strand" evidence="13">
    <location>
        <begin position="89"/>
        <end position="94"/>
    </location>
</feature>
<feature type="helix" evidence="13">
    <location>
        <begin position="100"/>
        <end position="102"/>
    </location>
</feature>
<feature type="helix" evidence="13">
    <location>
        <begin position="105"/>
        <end position="108"/>
    </location>
</feature>
<feature type="strand" evidence="13">
    <location>
        <begin position="115"/>
        <end position="119"/>
    </location>
</feature>
<feature type="strand" evidence="14">
    <location>
        <begin position="125"/>
        <end position="127"/>
    </location>
</feature>
<feature type="strand" evidence="13">
    <location>
        <begin position="130"/>
        <end position="136"/>
    </location>
</feature>
<feature type="strand" evidence="13">
    <location>
        <begin position="139"/>
        <end position="144"/>
    </location>
</feature>
<feature type="helix" evidence="13">
    <location>
        <begin position="148"/>
        <end position="150"/>
    </location>
</feature>
<feature type="strand" evidence="13">
    <location>
        <begin position="151"/>
        <end position="153"/>
    </location>
</feature>
<feature type="strand" evidence="13">
    <location>
        <begin position="156"/>
        <end position="160"/>
    </location>
</feature>
<feature type="strand" evidence="13">
    <location>
        <begin position="165"/>
        <end position="170"/>
    </location>
</feature>
<feature type="helix" evidence="13">
    <location>
        <begin position="176"/>
        <end position="178"/>
    </location>
</feature>
<feature type="helix" evidence="13">
    <location>
        <begin position="181"/>
        <end position="201"/>
    </location>
</feature>
<feature type="strand" evidence="13">
    <location>
        <begin position="204"/>
        <end position="209"/>
    </location>
</feature>
<feature type="helix" evidence="13">
    <location>
        <begin position="216"/>
        <end position="218"/>
    </location>
</feature>
<feature type="helix" evidence="13">
    <location>
        <begin position="223"/>
        <end position="225"/>
    </location>
</feature>
<feature type="helix" evidence="13">
    <location>
        <begin position="233"/>
        <end position="245"/>
    </location>
</feature>
<feature type="strand" evidence="13">
    <location>
        <begin position="248"/>
        <end position="250"/>
    </location>
</feature>
<feature type="helix" evidence="13">
    <location>
        <begin position="251"/>
        <end position="255"/>
    </location>
</feature>
<feature type="helix" evidence="13">
    <location>
        <begin position="269"/>
        <end position="271"/>
    </location>
</feature>
<feature type="turn" evidence="13">
    <location>
        <begin position="272"/>
        <end position="276"/>
    </location>
</feature>
<feature type="strand" evidence="13">
    <location>
        <begin position="282"/>
        <end position="287"/>
    </location>
</feature>
<feature type="helix" evidence="13">
    <location>
        <begin position="288"/>
        <end position="293"/>
    </location>
</feature>
<feature type="strand" evidence="13">
    <location>
        <begin position="294"/>
        <end position="299"/>
    </location>
</feature>
<feature type="strand" evidence="13">
    <location>
        <begin position="305"/>
        <end position="308"/>
    </location>
</feature>
<feature type="strand" evidence="13">
    <location>
        <begin position="311"/>
        <end position="315"/>
    </location>
</feature>
<accession>P28352</accession>
<dbReference type="EC" id="3.1.11.2" evidence="3"/>
<dbReference type="EC" id="3.1.21.-" evidence="3"/>
<dbReference type="EMBL" id="D90374">
    <property type="protein sequence ID" value="BAA14382.1"/>
    <property type="molecule type" value="mRNA"/>
</dbReference>
<dbReference type="EMBL" id="U12273">
    <property type="protein sequence ID" value="AAC13769.1"/>
    <property type="molecule type" value="Genomic_DNA"/>
</dbReference>
<dbReference type="EMBL" id="D38077">
    <property type="protein sequence ID" value="BAA07270.1"/>
    <property type="molecule type" value="Genomic_DNA"/>
</dbReference>
<dbReference type="EMBL" id="BC052401">
    <property type="protein sequence ID" value="AAH52401.1"/>
    <property type="molecule type" value="mRNA"/>
</dbReference>
<dbReference type="CCDS" id="CCDS27027.1"/>
<dbReference type="PIR" id="A39500">
    <property type="entry name" value="A39500"/>
</dbReference>
<dbReference type="RefSeq" id="NP_033817.1">
    <property type="nucleotide sequence ID" value="NM_009687.2"/>
</dbReference>
<dbReference type="PDB" id="7CD5">
    <property type="method" value="X-ray"/>
    <property type="resolution" value="2.70 A"/>
    <property type="chains" value="A=1-317"/>
</dbReference>
<dbReference type="PDB" id="7CD6">
    <property type="method" value="X-ray"/>
    <property type="resolution" value="2.70 A"/>
    <property type="chains" value="A=31-317"/>
</dbReference>
<dbReference type="PDBsum" id="7CD5"/>
<dbReference type="PDBsum" id="7CD6"/>
<dbReference type="SMR" id="P28352"/>
<dbReference type="BioGRID" id="198145">
    <property type="interactions" value="19"/>
</dbReference>
<dbReference type="ELM" id="P28352"/>
<dbReference type="FunCoup" id="P28352">
    <property type="interactions" value="2581"/>
</dbReference>
<dbReference type="IntAct" id="P28352">
    <property type="interactions" value="3"/>
</dbReference>
<dbReference type="STRING" id="10090.ENSMUSP00000042602"/>
<dbReference type="GlyGen" id="P28352">
    <property type="glycosylation" value="1 site, 1 O-linked glycan (1 site)"/>
</dbReference>
<dbReference type="iPTMnet" id="P28352"/>
<dbReference type="PhosphoSitePlus" id="P28352"/>
<dbReference type="SwissPalm" id="P28352"/>
<dbReference type="jPOST" id="P28352"/>
<dbReference type="PaxDb" id="10090-ENSMUSP00000042602"/>
<dbReference type="PeptideAtlas" id="P28352"/>
<dbReference type="ProteomicsDB" id="281828"/>
<dbReference type="Pumba" id="P28352"/>
<dbReference type="Antibodypedia" id="62">
    <property type="antibodies" value="947 antibodies from 46 providers"/>
</dbReference>
<dbReference type="DNASU" id="11792"/>
<dbReference type="Ensembl" id="ENSMUST00000049411.12">
    <property type="protein sequence ID" value="ENSMUSP00000042602.6"/>
    <property type="gene ID" value="ENSMUSG00000035960.15"/>
</dbReference>
<dbReference type="GeneID" id="11792"/>
<dbReference type="KEGG" id="mmu:11792"/>
<dbReference type="UCSC" id="uc007tly.2">
    <property type="organism name" value="mouse"/>
</dbReference>
<dbReference type="AGR" id="MGI:88042"/>
<dbReference type="CTD" id="328"/>
<dbReference type="MGI" id="MGI:88042">
    <property type="gene designation" value="Apex1"/>
</dbReference>
<dbReference type="VEuPathDB" id="HostDB:ENSMUSG00000035960"/>
<dbReference type="eggNOG" id="KOG1294">
    <property type="taxonomic scope" value="Eukaryota"/>
</dbReference>
<dbReference type="GeneTree" id="ENSGT00530000063540"/>
<dbReference type="HOGENOM" id="CLU_027539_1_3_1"/>
<dbReference type="InParanoid" id="P28352"/>
<dbReference type="OMA" id="WWSYRGR"/>
<dbReference type="OrthoDB" id="498125at2759"/>
<dbReference type="PhylomeDB" id="P28352"/>
<dbReference type="TreeFam" id="TF315048"/>
<dbReference type="BRENDA" id="4.2.99.18">
    <property type="organism ID" value="3474"/>
</dbReference>
<dbReference type="Reactome" id="R-MMU-110357">
    <property type="pathway name" value="Displacement of DNA glycosylase by APEX1"/>
</dbReference>
<dbReference type="Reactome" id="R-MMU-110362">
    <property type="pathway name" value="POLB-Dependent Long Patch Base Excision Repair"/>
</dbReference>
<dbReference type="Reactome" id="R-MMU-110373">
    <property type="pathway name" value="Resolution of AP sites via the multiple-nucleotide patch replacement pathway"/>
</dbReference>
<dbReference type="Reactome" id="R-MMU-5651801">
    <property type="pathway name" value="PCNA-Dependent Long Patch Base Excision Repair"/>
</dbReference>
<dbReference type="Reactome" id="R-MMU-73930">
    <property type="pathway name" value="Abasic sugar-phosphate removal via the single-nucleotide replacement pathway"/>
</dbReference>
<dbReference type="Reactome" id="R-MMU-73933">
    <property type="pathway name" value="Resolution of Abasic Sites (AP sites)"/>
</dbReference>
<dbReference type="BioGRID-ORCS" id="11792">
    <property type="hits" value="11 hits in 118 CRISPR screens"/>
</dbReference>
<dbReference type="ChiTaRS" id="Apex1">
    <property type="organism name" value="mouse"/>
</dbReference>
<dbReference type="PRO" id="PR:P28352"/>
<dbReference type="Proteomes" id="UP000000589">
    <property type="component" value="Chromosome 14"/>
</dbReference>
<dbReference type="RNAct" id="P28352">
    <property type="molecule type" value="protein"/>
</dbReference>
<dbReference type="Bgee" id="ENSMUSG00000035960">
    <property type="expression patterns" value="Expressed in primitive streak and 302 other cell types or tissues"/>
</dbReference>
<dbReference type="ExpressionAtlas" id="P28352">
    <property type="expression patterns" value="baseline and differential"/>
</dbReference>
<dbReference type="GO" id="GO:0005813">
    <property type="term" value="C:centrosome"/>
    <property type="evidence" value="ECO:0007669"/>
    <property type="project" value="Ensembl"/>
</dbReference>
<dbReference type="GO" id="GO:0005737">
    <property type="term" value="C:cytoplasm"/>
    <property type="evidence" value="ECO:0000314"/>
    <property type="project" value="MGI"/>
</dbReference>
<dbReference type="GO" id="GO:0005783">
    <property type="term" value="C:endoplasmic reticulum"/>
    <property type="evidence" value="ECO:0007669"/>
    <property type="project" value="UniProtKB-SubCell"/>
</dbReference>
<dbReference type="GO" id="GO:0005739">
    <property type="term" value="C:mitochondrion"/>
    <property type="evidence" value="ECO:0000250"/>
    <property type="project" value="UniProtKB"/>
</dbReference>
<dbReference type="GO" id="GO:0016607">
    <property type="term" value="C:nuclear speck"/>
    <property type="evidence" value="ECO:0000250"/>
    <property type="project" value="UniProtKB"/>
</dbReference>
<dbReference type="GO" id="GO:0005730">
    <property type="term" value="C:nucleolus"/>
    <property type="evidence" value="ECO:0000250"/>
    <property type="project" value="UniProtKB"/>
</dbReference>
<dbReference type="GO" id="GO:0005654">
    <property type="term" value="C:nucleoplasm"/>
    <property type="evidence" value="ECO:0000250"/>
    <property type="project" value="UniProtKB"/>
</dbReference>
<dbReference type="GO" id="GO:0005634">
    <property type="term" value="C:nucleus"/>
    <property type="evidence" value="ECO:0000314"/>
    <property type="project" value="MGI"/>
</dbReference>
<dbReference type="GO" id="GO:0048471">
    <property type="term" value="C:perinuclear region of cytoplasm"/>
    <property type="evidence" value="ECO:0000250"/>
    <property type="project" value="UniProtKB"/>
</dbReference>
<dbReference type="GO" id="GO:0008408">
    <property type="term" value="F:3'-5' exonuclease activity"/>
    <property type="evidence" value="ECO:0000250"/>
    <property type="project" value="UniProtKB"/>
</dbReference>
<dbReference type="GO" id="GO:0008296">
    <property type="term" value="F:3'-5'-DNA exonuclease activity"/>
    <property type="evidence" value="ECO:0007669"/>
    <property type="project" value="Ensembl"/>
</dbReference>
<dbReference type="GO" id="GO:0031490">
    <property type="term" value="F:chromatin DNA binding"/>
    <property type="evidence" value="ECO:0000250"/>
    <property type="project" value="UniProtKB"/>
</dbReference>
<dbReference type="GO" id="GO:0052720">
    <property type="term" value="F:class II DNA-(apurinic or apyrimidinic site) endonuclease activity"/>
    <property type="evidence" value="ECO:0000250"/>
    <property type="project" value="UniProtKB"/>
</dbReference>
<dbReference type="GO" id="GO:0003684">
    <property type="term" value="F:damaged DNA binding"/>
    <property type="evidence" value="ECO:0000250"/>
    <property type="project" value="UniProtKB"/>
</dbReference>
<dbReference type="GO" id="GO:0003677">
    <property type="term" value="F:DNA binding"/>
    <property type="evidence" value="ECO:0000250"/>
    <property type="project" value="UniProtKB"/>
</dbReference>
<dbReference type="GO" id="GO:0140431">
    <property type="term" value="F:DNA-(abasic site) binding"/>
    <property type="evidence" value="ECO:0000250"/>
    <property type="project" value="UniProtKB"/>
</dbReference>
<dbReference type="GO" id="GO:0003906">
    <property type="term" value="F:DNA-(apurinic or apyrimidinic site) endonuclease activity"/>
    <property type="evidence" value="ECO:0000250"/>
    <property type="project" value="UniProtKB"/>
</dbReference>
<dbReference type="GO" id="GO:0008309">
    <property type="term" value="F:double-stranded DNA exodeoxyribonuclease activity"/>
    <property type="evidence" value="ECO:0007669"/>
    <property type="project" value="Ensembl"/>
</dbReference>
<dbReference type="GO" id="GO:0003691">
    <property type="term" value="F:double-stranded telomeric DNA binding"/>
    <property type="evidence" value="ECO:0007669"/>
    <property type="project" value="Ensembl"/>
</dbReference>
<dbReference type="GO" id="GO:0046872">
    <property type="term" value="F:metal ion binding"/>
    <property type="evidence" value="ECO:0000250"/>
    <property type="project" value="UniProtKB"/>
</dbReference>
<dbReference type="GO" id="GO:0016491">
    <property type="term" value="F:oxidoreductase activity"/>
    <property type="evidence" value="ECO:0000250"/>
    <property type="project" value="UniProtKB"/>
</dbReference>
<dbReference type="GO" id="GO:0090580">
    <property type="term" value="F:phosphodiesterase activity, acting on 3'-phosphoglycolate-terminated DNA strands"/>
    <property type="evidence" value="ECO:0007669"/>
    <property type="project" value="Ensembl"/>
</dbReference>
<dbReference type="GO" id="GO:0003723">
    <property type="term" value="F:RNA binding"/>
    <property type="evidence" value="ECO:0007669"/>
    <property type="project" value="UniProtKB-KW"/>
</dbReference>
<dbReference type="GO" id="GO:0016890">
    <property type="term" value="F:site-specific endodeoxyribonuclease activity, specific for altered base"/>
    <property type="evidence" value="ECO:0000250"/>
    <property type="project" value="UniProtKB"/>
</dbReference>
<dbReference type="GO" id="GO:0003713">
    <property type="term" value="F:transcription coactivator activity"/>
    <property type="evidence" value="ECO:0000250"/>
    <property type="project" value="UniProtKB"/>
</dbReference>
<dbReference type="GO" id="GO:0045454">
    <property type="term" value="P:cell redox homeostasis"/>
    <property type="evidence" value="ECO:0000314"/>
    <property type="project" value="MGI"/>
</dbReference>
<dbReference type="GO" id="GO:0006308">
    <property type="term" value="P:DNA catabolic process"/>
    <property type="evidence" value="ECO:0007669"/>
    <property type="project" value="Ensembl"/>
</dbReference>
<dbReference type="GO" id="GO:0006310">
    <property type="term" value="P:DNA recombination"/>
    <property type="evidence" value="ECO:0007669"/>
    <property type="project" value="UniProtKB-KW"/>
</dbReference>
<dbReference type="GO" id="GO:0006281">
    <property type="term" value="P:DNA repair"/>
    <property type="evidence" value="ECO:0000250"/>
    <property type="project" value="UniProtKB"/>
</dbReference>
<dbReference type="GO" id="GO:0044029">
    <property type="term" value="P:positive regulation of gene expression via chromosomal CpG island demethylation"/>
    <property type="evidence" value="ECO:0000250"/>
    <property type="project" value="UniProtKB"/>
</dbReference>
<dbReference type="GO" id="GO:0045944">
    <property type="term" value="P:positive regulation of transcription by RNA polymerase II"/>
    <property type="evidence" value="ECO:0007669"/>
    <property type="project" value="Ensembl"/>
</dbReference>
<dbReference type="GO" id="GO:0042981">
    <property type="term" value="P:regulation of apoptotic process"/>
    <property type="evidence" value="ECO:0000250"/>
    <property type="project" value="UniProtKB"/>
</dbReference>
<dbReference type="GO" id="GO:0043488">
    <property type="term" value="P:regulation of mRNA stability"/>
    <property type="evidence" value="ECO:0000250"/>
    <property type="project" value="UniProtKB"/>
</dbReference>
<dbReference type="GO" id="GO:0097698">
    <property type="term" value="P:telomere maintenance via base-excision repair"/>
    <property type="evidence" value="ECO:0007669"/>
    <property type="project" value="Ensembl"/>
</dbReference>
<dbReference type="CDD" id="cd09087">
    <property type="entry name" value="Ape1-like_AP-endo"/>
    <property type="match status" value="1"/>
</dbReference>
<dbReference type="FunFam" id="3.60.10.10:FF:000009">
    <property type="entry name" value="DNA-(apurinic or apyrimidinic site) lyase"/>
    <property type="match status" value="1"/>
</dbReference>
<dbReference type="Gene3D" id="3.60.10.10">
    <property type="entry name" value="Endonuclease/exonuclease/phosphatase"/>
    <property type="match status" value="1"/>
</dbReference>
<dbReference type="InterPro" id="IPR004808">
    <property type="entry name" value="AP_endonuc_1"/>
</dbReference>
<dbReference type="InterPro" id="IPR020847">
    <property type="entry name" value="AP_endonuclease_F1_BS"/>
</dbReference>
<dbReference type="InterPro" id="IPR020848">
    <property type="entry name" value="AP_endonuclease_F1_CS"/>
</dbReference>
<dbReference type="InterPro" id="IPR036691">
    <property type="entry name" value="Endo/exonu/phosph_ase_sf"/>
</dbReference>
<dbReference type="InterPro" id="IPR005135">
    <property type="entry name" value="Endo/exonuclease/phosphatase"/>
</dbReference>
<dbReference type="NCBIfam" id="TIGR00195">
    <property type="entry name" value="exoDNase_III"/>
    <property type="match status" value="1"/>
</dbReference>
<dbReference type="NCBIfam" id="TIGR00633">
    <property type="entry name" value="xth"/>
    <property type="match status" value="1"/>
</dbReference>
<dbReference type="PANTHER" id="PTHR22748">
    <property type="entry name" value="AP ENDONUCLEASE"/>
    <property type="match status" value="1"/>
</dbReference>
<dbReference type="PANTHER" id="PTHR22748:SF6">
    <property type="entry name" value="DNA-(APURINIC OR APYRIMIDINIC SITE) ENDONUCLEASE"/>
    <property type="match status" value="1"/>
</dbReference>
<dbReference type="Pfam" id="PF03372">
    <property type="entry name" value="Exo_endo_phos"/>
    <property type="match status" value="1"/>
</dbReference>
<dbReference type="SUPFAM" id="SSF56219">
    <property type="entry name" value="DNase I-like"/>
    <property type="match status" value="1"/>
</dbReference>
<dbReference type="PROSITE" id="PS00726">
    <property type="entry name" value="AP_NUCLEASE_F1_1"/>
    <property type="match status" value="1"/>
</dbReference>
<dbReference type="PROSITE" id="PS00727">
    <property type="entry name" value="AP_NUCLEASE_F1_2"/>
    <property type="match status" value="1"/>
</dbReference>
<dbReference type="PROSITE" id="PS00728">
    <property type="entry name" value="AP_NUCLEASE_F1_3"/>
    <property type="match status" value="1"/>
</dbReference>
<dbReference type="PROSITE" id="PS51435">
    <property type="entry name" value="AP_NUCLEASE_F1_4"/>
    <property type="match status" value="1"/>
</dbReference>
<protein>
    <recommendedName>
        <fullName>DNA repair nuclease/redox regulator APEX1</fullName>
        <ecNumber evidence="3">3.1.11.2</ecNumber>
        <ecNumber evidence="3">3.1.21.-</ecNumber>
    </recommendedName>
    <alternativeName>
        <fullName>APEX nuclease</fullName>
        <shortName>APEN</shortName>
    </alternativeName>
    <alternativeName>
        <fullName>Apurinic-apyrimidinic endonuclease 1</fullName>
        <shortName>AP endonuclease 1</shortName>
    </alternativeName>
    <alternativeName>
        <fullName>Redox factor-1</fullName>
        <shortName>REF-1</shortName>
    </alternativeName>
    <component>
        <recommendedName>
            <fullName>DNA repair nuclease/redox regulator APEX1, mitochondrial</fullName>
        </recommendedName>
    </component>
</protein>
<comment type="function">
    <text evidence="3 7 10">Multifunctional protein that plays a central role in the cellular response to oxidative stress. The two major activities of APEX1 are DNA repair and redox regulation of transcriptional factors (By similarity). Functions as an apurinic/apyrimidinic (AP) endodeoxyribonuclease in the base excision repair (BER) pathway of DNA lesions induced by oxidative and alkylating agents. Initiates repair of AP sites in DNA by catalyzing hydrolytic incision of the phosphodiester backbone immediately adjacent to the damage, generating a single-strand break with 5'-deoxyribose phosphate and 3'-hydroxyl ends. Also incises at AP sites in the DNA strand of DNA/RNA hybrids, single-stranded DNA regions of R-loop structures, and single-stranded RNA molecules (By similarity). Operates at switch sites of immunoglobulin (Ig) constant regions where it mediates Ig isotype class switch recombination. Processes AP sites induced by successive action of AICDA and UNG. Generates staggered nicks in opposite DNA strands resulting in the formation of double-strand DNA breaks that are finally resolved via non-homologous end joining repair pathway (PubMed:18025127, PubMed:23382073). Has 3'-5' exodeoxyribonuclease activity on mismatched deoxyribonucleotides at the 3' termini of nicked or gapped DNA molecules during short-patch BER (By similarity). Possesses DNA 3' phosphodiesterase activity capable of removing lesions (such as phosphoglycolate and 8-oxoguanine) blocking the 3' side of DNA strand breaks (By similarity). Also acts as an endoribonuclease involved in the control of single-stranded RNA metabolism. Plays a role in regulating MYC mRNA turnover by preferentially cleaving in between UA and CA dinucleotides of the MYC coding region determinant (CRD). In association with NMD1, plays a role in the rRNA quality control process during cell cycle progression (By similarity). Acts as a loading factor for POLB onto non-incised AP sites in DNA and stimulates the 5'-terminal deoxyribose 5'-phosphate (dRp) excision activity of POLB (By similarity). Exerts reversible nuclear redox activity to regulate DNA binding affinity and transcriptional activity of transcriptional factors by controlling the redox status of their DNA-binding domain, such as the FOS/JUN AP-1 complex after exposure to IR (By similarity). Involved in calcium-dependent down-regulation of parathyroid hormone (PTH) expression by binding to negative calcium response elements (nCaREs). Together with HNRNPL or the dimer XRCC5/XRCC6, associates with nCaRE, acting as an activator of transcriptional repression (By similarity). May also play a role in the epigenetic regulation of gene expression by participating in DNA demethylation (By similarity). Stimulates the YBX1-mediated MDR1 promoter activity, when acetylated at Lys-6 and Lys-7, leading to drug resistance (By similarity). Plays a role in protection from granzyme-mediated cellular repair leading to cell death (By similarity). Binds DNA and RNA. Associates, together with YBX1, on the MDR1 promoter. Together with NPM1, associates with rRNA (By similarity).</text>
</comment>
<comment type="catalytic activity">
    <reaction evidence="3">
        <text>a deoxyribonucleotide-2'-deoxyribose-5'-monophosphate-DNA + H2O = a 5'-end 2'-deoxyribose-5'-monophosphate-DNA + a 3'-end 2'-deoxyribonucleotide-DNA + H(+)</text>
        <dbReference type="Rhea" id="RHEA:81527"/>
        <dbReference type="Rhea" id="RHEA-COMP:13863"/>
        <dbReference type="Rhea" id="RHEA-COMP:19699"/>
        <dbReference type="Rhea" id="RHEA-COMP:19703"/>
        <dbReference type="ChEBI" id="CHEBI:15377"/>
        <dbReference type="ChEBI" id="CHEBI:15378"/>
        <dbReference type="ChEBI" id="CHEBI:138148"/>
        <dbReference type="ChEBI" id="CHEBI:231912"/>
        <dbReference type="ChEBI" id="CHEBI:231913"/>
    </reaction>
    <physiologicalReaction direction="left-to-right" evidence="3">
        <dbReference type="Rhea" id="RHEA:81528"/>
    </physiologicalReaction>
</comment>
<comment type="catalytic activity">
    <reaction evidence="3">
        <text>Exonucleolytic cleavage in the 3'- to 5'-direction to yield nucleoside 5'-phosphates.</text>
        <dbReference type="EC" id="3.1.11.2"/>
    </reaction>
</comment>
<comment type="catalytic activity">
    <reaction evidence="3">
        <text>a 3'-end 2'-deoxyribonucleotide-3'-phosphoglycolate-DNA + H2O = 2-phosphoglycolate + a 3'-end 2'-deoxyribonucleotide-DNA + H(+)</text>
        <dbReference type="Rhea" id="RHEA:81467"/>
        <dbReference type="Rhea" id="RHEA-COMP:13863"/>
        <dbReference type="Rhea" id="RHEA-COMP:19686"/>
        <dbReference type="ChEBI" id="CHEBI:15377"/>
        <dbReference type="ChEBI" id="CHEBI:15378"/>
        <dbReference type="ChEBI" id="CHEBI:58033"/>
        <dbReference type="ChEBI" id="CHEBI:138148"/>
        <dbReference type="ChEBI" id="CHEBI:231894"/>
    </reaction>
    <physiologicalReaction direction="left-to-right" evidence="3">
        <dbReference type="Rhea" id="RHEA:81468"/>
    </physiologicalReaction>
</comment>
<comment type="catalytic activity">
    <reaction evidence="3">
        <text>a 3'-end 2'-deoxyribonucleotide-8-oxoguanine-DNA + H2O = 8-oxo-dGMP + a 3'-end 2'-deoxyribonucleotide-DNA + H(+)</text>
        <dbReference type="Rhea" id="RHEA:81471"/>
        <dbReference type="Rhea" id="RHEA-COMP:13863"/>
        <dbReference type="Rhea" id="RHEA-COMP:19687"/>
        <dbReference type="ChEBI" id="CHEBI:15377"/>
        <dbReference type="ChEBI" id="CHEBI:15378"/>
        <dbReference type="ChEBI" id="CHEBI:63224"/>
        <dbReference type="ChEBI" id="CHEBI:138148"/>
        <dbReference type="ChEBI" id="CHEBI:231896"/>
    </reaction>
    <physiologicalReaction direction="left-to-right" evidence="3">
        <dbReference type="Rhea" id="RHEA:81472"/>
    </physiologicalReaction>
</comment>
<comment type="cofactor">
    <cofactor evidence="3">
        <name>Mg(2+)</name>
        <dbReference type="ChEBI" id="CHEBI:18420"/>
    </cofactor>
    <cofactor evidence="3">
        <name>Mn(2+)</name>
        <dbReference type="ChEBI" id="CHEBI:29035"/>
    </cofactor>
    <text evidence="3">Probably binds two magnesium or manganese ions per subunit.</text>
</comment>
<comment type="activity regulation">
    <text evidence="3">NPM1 stimulates endodeoxyribonuclease activity on double-stranded DNA with AP sites, but inhibits endoribonuclease activity on single-stranded RNA containing AP sites.</text>
</comment>
<comment type="subunit">
    <text evidence="3 9">Monomer. Homodimer; disulfide-linked. Component of the SET complex, composed of at least APEX1, SET, ANP32A, HMGB2, NME1 and TREX1. Associates with the dimer XRCC5/XRCC6 in a DNA-dependent manner. Interacts with SIRT1; the interaction is increased in the context of genotoxic stress. Interacts with HDAC1, HDAC2 and HDAC3; the interactions are not dependent on the APEX1 acetylation status. Interacts with XRCC1; the interaction is induced by SIRT1 and increased with the APEX1 acetylated form. Interacts with NPM1 (via N-terminal domain); the interaction is RNA-dependent and decreases in hydrogen peroxide-damaged cells. Interacts (via N-terminus) with YBX1 (via C-terminus); the interaction is increased in presence of APEX1 acetylated at Lys-6 and Lys-7. Interacts with HNRNPL; the interaction is DNA-dependent. Interacts (via N-terminus) with KPNA1 and KPNA2. Interacts with TXN; the interaction stimulates the FOS/JUN AP-1 complex DNA-binding activity in a redox-dependent manner. Interacts with GZMA, KRT8, MDM2, POLB, PRDX6, PRPF19, RPLP0, TOMM20 and WDR77 (By similarity). Binds to CDK5 (PubMed:20473298).</text>
</comment>
<comment type="subcellular location">
    <subcellularLocation>
        <location>Nucleus</location>
    </subcellularLocation>
    <subcellularLocation>
        <location evidence="1">Nucleus</location>
        <location evidence="1">Nucleolus</location>
    </subcellularLocation>
    <subcellularLocation>
        <location evidence="4">Nucleus speckle</location>
    </subcellularLocation>
    <subcellularLocation>
        <location evidence="1">Endoplasmic reticulum</location>
    </subcellularLocation>
    <subcellularLocation>
        <location>Cytoplasm</location>
    </subcellularLocation>
    <text evidence="1">Colocalized with SIRT1 in the nucleus. Colocalized with YBX1 in nuclear speckles after genotoxic stress. Together with OGG1 is recruited to nuclear speckles in UVA-irradiated cells. Colocalized with nucleolin and NPM1 in the nucleolus. Its nucleolar localization is cell cycle dependent and requires active rRNA transcription. Colocalized with calreticulin in the endoplasmic reticulum. Translocation from the nucleus to the cytoplasm is stimulated in presence of nitric oxide (NO) and function in a CRM1-dependent manner, possibly as a consequence of demasking a nuclear export signal (amino acid position 63-79). S-nitrosylation at Cys-92 and Cys-309 regulates its nuclear-cytosolic shuttling. Ubiquitinated form is localized predominantly in the cytoplasm. Detected in the cytoplasm of B-cells stimulated to switch (By similarity).</text>
</comment>
<comment type="subcellular location">
    <molecule>DNA repair nuclease/redox regulator APEX1, mitochondrial</molecule>
    <subcellularLocation>
        <location>Mitochondrion</location>
    </subcellularLocation>
    <text evidence="1">Translocation from the cytoplasm to the mitochondria is mediated by ROS signaling and cleavage mediated by granzyme A. Tom20-dependent translocated mitochondrial APEX1 level is significantly increased after genotoxic stress (By similarity). The cleaved APEX2 is only detected in mitochondria.</text>
</comment>
<comment type="tissue specificity">
    <text>Expressed in both resting and stimulated B cells stimulated to switch (at protein level).</text>
</comment>
<comment type="domain">
    <text evidence="1">The N-terminus contains the redox activity while the C-terminus exerts the DNA AP-endodeoxyribonuclease activity; both function are independent in their actions. An unconventional mitochondrial targeting sequence (MTS) is harbored within the C-terminus, that appears to be masked by the N-terminal sequence containing the nuclear localization signal (NLS), that probably blocks the interaction between the MTS and Tom proteins (By similarity).</text>
</comment>
<comment type="PTM">
    <text evidence="3 9">Phosphorylated. Phosphorylation by kinase PKC or casein kinase CK2 results in enhanced redox activity that stimulates binding of the FOS/JUN AP-1 complex to its cognate binding site. AP-endodeoxyribonuclease activity is not affected by CK2-mediated phosphorylation (By similarity). Phosphorylation of Thr-232 by CDK5 in response to MPP(+)/MPTP (1-methyl-4-phenylpyridinium) reduces AP-endodeoxyribonuclease activity resulting in accumulation of DNA damage and contributing to neuronal death.</text>
</comment>
<comment type="PTM">
    <text evidence="3">Acetylated on Lys-6 and Lys-7. Acetylation is increased by the transcriptional coactivator EP300 acetyltransferase, genotoxic agents like H(2)O(2) and methyl methanesulfonate (MMS). Acetylation increases its binding affinity to the negative calcium response element (nCaRE) DNA promoter. The acetylated form induces a stronger binding of YBX1 to the Y-box sequence in the MDR1 promoter than the unacetylated form. Deacetylated on lysines. Lys-6 and Lys-7 are deacetylated by SIRT1 (By similarity).</text>
</comment>
<comment type="PTM">
    <text evidence="3">Cleaved at Lys-30 by granzyme A to create the mitochondrial form; leading in reduction of binding to DNA, AP endodeoxyribonuclease activity, redox activation of transcription factors and to enhanced cell death. Cleaved by granzyme K; leading to intracellular ROS accumulation and enhanced cell death after oxidative stress (By similarity).</text>
</comment>
<comment type="PTM">
    <text evidence="3">Cys-64 and Cys-92 are nitrosylated in response to nitric oxide (NO) and lead to the exposure of the nuclear export signal (NES).</text>
</comment>
<comment type="PTM">
    <text evidence="3">Ubiquitinated by MDM2; leading to translocation to the cytoplasm and proteasomal degradation.</text>
</comment>
<comment type="miscellaneous">
    <text evidence="2">The specific activity of the cleaved mitochondrial endodeoxyribonuclease appears to be about 3-fold higher than of the full-length form. Extract of mitochondria, but not of nuclei or cytosol, cleaves recombinant APEX1 to generate a mitochondrial APEX1-sized product (By similarity).</text>
</comment>
<comment type="similarity">
    <text evidence="11">Belongs to the DNA repair enzymes AP/ExoA family.</text>
</comment>
<comment type="caution">
    <text evidence="8">The efficiency of Ig isotype class switch recombination is not affected by transient APEX1 knockdown.</text>
</comment>
<organism>
    <name type="scientific">Mus musculus</name>
    <name type="common">Mouse</name>
    <dbReference type="NCBI Taxonomy" id="10090"/>
    <lineage>
        <taxon>Eukaryota</taxon>
        <taxon>Metazoa</taxon>
        <taxon>Chordata</taxon>
        <taxon>Craniata</taxon>
        <taxon>Vertebrata</taxon>
        <taxon>Euteleostomi</taxon>
        <taxon>Mammalia</taxon>
        <taxon>Eutheria</taxon>
        <taxon>Euarchontoglires</taxon>
        <taxon>Glires</taxon>
        <taxon>Rodentia</taxon>
        <taxon>Myomorpha</taxon>
        <taxon>Muroidea</taxon>
        <taxon>Muridae</taxon>
        <taxon>Murinae</taxon>
        <taxon>Mus</taxon>
        <taxon>Mus</taxon>
    </lineage>
</organism>
<proteinExistence type="evidence at protein level"/>
<evidence type="ECO:0000250" key="1"/>
<evidence type="ECO:0000250" key="2">
    <source>
        <dbReference type="UniProtKB" id="P23196"/>
    </source>
</evidence>
<evidence type="ECO:0000250" key="3">
    <source>
        <dbReference type="UniProtKB" id="P27695"/>
    </source>
</evidence>
<evidence type="ECO:0000255" key="4">
    <source>
        <dbReference type="PROSITE-ProRule" id="PRU00764"/>
    </source>
</evidence>
<evidence type="ECO:0000256" key="5">
    <source>
        <dbReference type="SAM" id="MobiDB-lite"/>
    </source>
</evidence>
<evidence type="ECO:0000269" key="6">
    <source>
    </source>
</evidence>
<evidence type="ECO:0000269" key="7">
    <source>
    </source>
</evidence>
<evidence type="ECO:0000269" key="8">
    <source>
    </source>
</evidence>
<evidence type="ECO:0000269" key="9">
    <source>
    </source>
</evidence>
<evidence type="ECO:0000269" key="10">
    <source>
    </source>
</evidence>
<evidence type="ECO:0000305" key="11"/>
<evidence type="ECO:0007744" key="12">
    <source>
    </source>
</evidence>
<evidence type="ECO:0007829" key="13">
    <source>
        <dbReference type="PDB" id="7CD5"/>
    </source>
</evidence>
<evidence type="ECO:0007829" key="14">
    <source>
        <dbReference type="PDB" id="7CD6"/>
    </source>
</evidence>
<reference key="1">
    <citation type="journal article" date="1991" name="J. Biol. Chem.">
        <title>cDNA and deduced amino acid sequence of a mouse DNA repair enzyme (APEX nuclease) with significant homology to Escherichia coli exonuclease III.</title>
        <authorList>
            <person name="Seki S."/>
            <person name="Akiyama K."/>
            <person name="Watanabe S."/>
            <person name="Hatsushika M."/>
            <person name="Ikeda S."/>
            <person name="Tsutsui K."/>
        </authorList>
    </citation>
    <scope>NUCLEOTIDE SEQUENCE [MRNA]</scope>
    <source>
        <strain>NFS</strain>
        <tissue>Spleen</tissue>
    </source>
</reference>
<reference key="2">
    <citation type="journal article" date="1994" name="Mamm. Genome">
        <title>Genomic structure of the mouse apurinic/apyrimidinic endonuclease gene.</title>
        <authorList>
            <person name="Takiguchi Y."/>
            <person name="Chen D.J."/>
        </authorList>
    </citation>
    <scope>NUCLEOTIDE SEQUENCE [GENOMIC DNA]</scope>
    <source>
        <strain>129</strain>
        <tissue>Embryo</tissue>
    </source>
</reference>
<reference key="3">
    <citation type="journal article" date="1995" name="Genomics">
        <title>Cloning, sequence analysis, and chromosomal assignment of the mouse Apex gene.</title>
        <authorList>
            <person name="Akiyama K."/>
            <person name="Nagao K."/>
            <person name="Oshida T."/>
            <person name="Tsutsui K."/>
            <person name="Yoshida M.C."/>
            <person name="Seki S."/>
        </authorList>
    </citation>
    <scope>NUCLEOTIDE SEQUENCE [GENOMIC DNA]</scope>
    <source>
        <strain>BALB/cJ</strain>
        <tissue>Blood</tissue>
    </source>
</reference>
<reference key="4">
    <citation type="journal article" date="2004" name="Genome Res.">
        <title>The status, quality, and expansion of the NIH full-length cDNA project: the Mammalian Gene Collection (MGC).</title>
        <authorList>
            <consortium name="The MGC Project Team"/>
        </authorList>
    </citation>
    <scope>NUCLEOTIDE SEQUENCE [LARGE SCALE MRNA]</scope>
    <source>
        <strain>C57BL/6J</strain>
        <tissue>Brain</tissue>
    </source>
</reference>
<reference key="5">
    <citation type="journal article" date="1991" name="Biochim. Biophys. Acta">
        <title>A mouse DNA repair enzyme (APEX nuclease) having exonuclease and apurinic/apyrimidinic endonuclease activities: purification and characterization.</title>
        <authorList>
            <person name="Seki S."/>
            <person name="Ikeda S."/>
            <person name="Watanabe S."/>
            <person name="Hatsushika M."/>
            <person name="Tsutsui K."/>
            <person name="Akiyama K."/>
            <person name="Zhang B."/>
        </authorList>
    </citation>
    <scope>PROTEIN SEQUENCE OF 2-22</scope>
    <scope>CHARACTERIZATION</scope>
    <source>
        <tissue>Ascites</tissue>
    </source>
</reference>
<reference key="6">
    <citation type="journal article" date="2006" name="Nucleic Acids Res.">
        <title>Identification and characterization of mitochondrial abasic (AP)-endonuclease in mammalian cells.</title>
        <authorList>
            <person name="Chattopadhyay R."/>
            <person name="Wiederhold L."/>
            <person name="Szczesny B."/>
            <person name="Boldogh I."/>
            <person name="Hazra T.K."/>
            <person name="Izumi T."/>
            <person name="Mitra S."/>
        </authorList>
    </citation>
    <scope>SUBCELLULAR LOCATION</scope>
</reference>
<reference key="7">
    <citation type="journal article" date="2007" name="J. Exp. Med.">
        <title>APE1- and APE2-dependent DNA breaks in immunoglobulin class switch recombination.</title>
        <authorList>
            <person name="Guikema J.E."/>
            <person name="Linehan E.K."/>
            <person name="Tsuchimoto D."/>
            <person name="Nakabeppu Y."/>
            <person name="Strauss P.R."/>
            <person name="Stavnezer J."/>
            <person name="Schrader C.E."/>
        </authorList>
    </citation>
    <scope>FUNCTION</scope>
    <scope>SUBCELLULAR LOCATION</scope>
</reference>
<reference key="8">
    <citation type="journal article" date="2009" name="Int. Immunol.">
        <title>Apex2 is required for efficient somatic hypermutation but not for class switch recombination of immunoglobulin genes.</title>
        <authorList>
            <person name="Sabouri Z."/>
            <person name="Okazaki I.M."/>
            <person name="Shinkura R."/>
            <person name="Begum N."/>
            <person name="Nagaoka H."/>
            <person name="Tsuchimoto D."/>
            <person name="Nakabeppu Y."/>
            <person name="Honjo T."/>
        </authorList>
    </citation>
    <scope>CAUTION</scope>
</reference>
<reference key="9">
    <citation type="journal article" date="2010" name="Cell">
        <title>A tissue-specific atlas of mouse protein phosphorylation and expression.</title>
        <authorList>
            <person name="Huttlin E.L."/>
            <person name="Jedrychowski M.P."/>
            <person name="Elias J.E."/>
            <person name="Goswami T."/>
            <person name="Rad R."/>
            <person name="Beausoleil S.A."/>
            <person name="Villen J."/>
            <person name="Haas W."/>
            <person name="Sowa M.E."/>
            <person name="Gygi S.P."/>
        </authorList>
    </citation>
    <scope>PHOSPHORYLATION [LARGE SCALE ANALYSIS] AT SER-18</scope>
    <scope>IDENTIFICATION BY MASS SPECTROMETRY [LARGE SCALE ANALYSIS]</scope>
    <source>
        <tissue>Brain</tissue>
        <tissue>Brown adipose tissue</tissue>
        <tissue>Heart</tissue>
        <tissue>Kidney</tissue>
        <tissue>Liver</tissue>
        <tissue>Lung</tissue>
        <tissue>Pancreas</tissue>
        <tissue>Spleen</tissue>
        <tissue>Testis</tissue>
    </source>
</reference>
<reference key="10">
    <citation type="journal article" date="2010" name="Nat. Cell Biol.">
        <title>The role of Cdk5-mediated apurinic/apyrimidinic endonuclease 1 phosphorylation in neuronal death.</title>
        <authorList>
            <person name="Huang E."/>
            <person name="Qu D."/>
            <person name="Zhang Y."/>
            <person name="Venderova K."/>
            <person name="Haque M.E."/>
            <person name="Rousseaux M.W.C."/>
            <person name="Slack R.S."/>
            <person name="Woulfe J.M."/>
            <person name="Park D.S."/>
        </authorList>
    </citation>
    <scope>PHOSPHORYLATION AT THR-232</scope>
    <scope>INTERACTION WITH CDK5</scope>
    <scope>MUTAGENESIS OF SER-53 AND THR-232</scope>
</reference>
<reference key="11">
    <citation type="journal article" date="2013" name="Mol. Cell. Biol.">
        <title>Apurinic/apyrimidinic endonuclease 1 is the essential nuclease during immunoglobulin class switch recombination.</title>
        <authorList>
            <person name="Masani S."/>
            <person name="Han L."/>
            <person name="Yu K."/>
        </authorList>
    </citation>
    <scope>FUNCTION</scope>
</reference>